<gene>
    <name evidence="1" type="primary">metE</name>
    <name type="ordered locus">PYRAB09060</name>
    <name type="ORF">PAB0608</name>
</gene>
<reference key="1">
    <citation type="journal article" date="2003" name="Mol. Microbiol.">
        <title>An integrated analysis of the genome of the hyperthermophilic archaeon Pyrococcus abyssi.</title>
        <authorList>
            <person name="Cohen G.N."/>
            <person name="Barbe V."/>
            <person name="Flament D."/>
            <person name="Galperin M."/>
            <person name="Heilig R."/>
            <person name="Lecompte O."/>
            <person name="Poch O."/>
            <person name="Prieur D."/>
            <person name="Querellou J."/>
            <person name="Ripp R."/>
            <person name="Thierry J.-C."/>
            <person name="Van der Oost J."/>
            <person name="Weissenbach J."/>
            <person name="Zivanovic Y."/>
            <person name="Forterre P."/>
        </authorList>
    </citation>
    <scope>NUCLEOTIDE SEQUENCE [LARGE SCALE GENOMIC DNA]</scope>
    <source>
        <strain>GE5 / Orsay</strain>
    </source>
</reference>
<reference key="2">
    <citation type="journal article" date="2012" name="Curr. Microbiol.">
        <title>Re-annotation of two hyperthermophilic archaea Pyrococcus abyssi GE5 and Pyrococcus furiosus DSM 3638.</title>
        <authorList>
            <person name="Gao J."/>
            <person name="Wang J."/>
        </authorList>
    </citation>
    <scope>GENOME REANNOTATION</scope>
    <source>
        <strain>GE5 / Orsay</strain>
    </source>
</reference>
<comment type="function">
    <text evidence="1">Catalyzes the transfer of a methyl group to L-homocysteine resulting in methionine formation. The physiological methyl donor is unknown.</text>
</comment>
<comment type="cofactor">
    <cofactor evidence="1">
        <name>Zn(2+)</name>
        <dbReference type="ChEBI" id="CHEBI:29105"/>
    </cofactor>
    <text evidence="1">Binds 1 zinc ion per subunit.</text>
</comment>
<comment type="pathway">
    <text evidence="1">Amino-acid biosynthesis; L-methionine biosynthesis via de novo pathway.</text>
</comment>
<comment type="similarity">
    <text evidence="1 2">Belongs to the archaeal MetE family.</text>
</comment>
<protein>
    <recommendedName>
        <fullName evidence="1">Methionine synthase</fullName>
        <ecNumber evidence="1">2.1.1.-</ecNumber>
    </recommendedName>
    <alternativeName>
        <fullName evidence="1">Homocysteine methyltransferase</fullName>
    </alternativeName>
</protein>
<accession>Q9V085</accession>
<accession>G8ZI73</accession>
<name>METE_PYRAB</name>
<dbReference type="EC" id="2.1.1.-" evidence="1"/>
<dbReference type="EMBL" id="AJ248285">
    <property type="protein sequence ID" value="CAB49820.1"/>
    <property type="molecule type" value="Genomic_DNA"/>
</dbReference>
<dbReference type="EMBL" id="HE613800">
    <property type="protein sequence ID" value="CCE70314.1"/>
    <property type="molecule type" value="Genomic_DNA"/>
</dbReference>
<dbReference type="PIR" id="C75138">
    <property type="entry name" value="C75138"/>
</dbReference>
<dbReference type="RefSeq" id="WP_010868029.1">
    <property type="nucleotide sequence ID" value="NC_000868.1"/>
</dbReference>
<dbReference type="SMR" id="Q9V085"/>
<dbReference type="STRING" id="272844.PAB0608"/>
<dbReference type="KEGG" id="pab:PAB0608"/>
<dbReference type="PATRIC" id="fig|272844.11.peg.959"/>
<dbReference type="eggNOG" id="arCOG01876">
    <property type="taxonomic scope" value="Archaea"/>
</dbReference>
<dbReference type="HOGENOM" id="CLU_040013_3_2_2"/>
<dbReference type="OrthoDB" id="17656at2157"/>
<dbReference type="PhylomeDB" id="Q9V085"/>
<dbReference type="UniPathway" id="UPA00051"/>
<dbReference type="Proteomes" id="UP000000810">
    <property type="component" value="Chromosome"/>
</dbReference>
<dbReference type="Proteomes" id="UP000009139">
    <property type="component" value="Chromosome"/>
</dbReference>
<dbReference type="GO" id="GO:0003871">
    <property type="term" value="F:5-methyltetrahydropteroyltriglutamate-homocysteine S-methyltransferase activity"/>
    <property type="evidence" value="ECO:0007669"/>
    <property type="project" value="InterPro"/>
</dbReference>
<dbReference type="GO" id="GO:0008270">
    <property type="term" value="F:zinc ion binding"/>
    <property type="evidence" value="ECO:0007669"/>
    <property type="project" value="InterPro"/>
</dbReference>
<dbReference type="GO" id="GO:0009086">
    <property type="term" value="P:methionine biosynthetic process"/>
    <property type="evidence" value="ECO:0007669"/>
    <property type="project" value="UniProtKB-UniRule"/>
</dbReference>
<dbReference type="GO" id="GO:0032259">
    <property type="term" value="P:methylation"/>
    <property type="evidence" value="ECO:0007669"/>
    <property type="project" value="UniProtKB-KW"/>
</dbReference>
<dbReference type="CDD" id="cd03311">
    <property type="entry name" value="CIMS_C_terminal_like"/>
    <property type="match status" value="1"/>
</dbReference>
<dbReference type="Gene3D" id="3.20.20.210">
    <property type="match status" value="1"/>
</dbReference>
<dbReference type="HAMAP" id="MF_00288">
    <property type="entry name" value="MetE"/>
    <property type="match status" value="1"/>
</dbReference>
<dbReference type="InterPro" id="IPR002629">
    <property type="entry name" value="Met_Synth_C/arc"/>
</dbReference>
<dbReference type="InterPro" id="IPR022921">
    <property type="entry name" value="MetE_arc"/>
</dbReference>
<dbReference type="InterPro" id="IPR038071">
    <property type="entry name" value="UROD/MetE-like_sf"/>
</dbReference>
<dbReference type="NCBIfam" id="NF003317">
    <property type="entry name" value="PRK04326.1"/>
    <property type="match status" value="1"/>
</dbReference>
<dbReference type="PANTHER" id="PTHR30519">
    <property type="entry name" value="5-METHYLTETRAHYDROPTEROYLTRIGLUTAMATE--HOMOCYSTEINE METHYLTRANSFERASE"/>
    <property type="match status" value="1"/>
</dbReference>
<dbReference type="Pfam" id="PF01717">
    <property type="entry name" value="Meth_synt_2"/>
    <property type="match status" value="1"/>
</dbReference>
<dbReference type="SUPFAM" id="SSF51726">
    <property type="entry name" value="UROD/MetE-like"/>
    <property type="match status" value="1"/>
</dbReference>
<proteinExistence type="inferred from homology"/>
<evidence type="ECO:0000255" key="1">
    <source>
        <dbReference type="HAMAP-Rule" id="MF_00288"/>
    </source>
</evidence>
<evidence type="ECO:0000305" key="2"/>
<feature type="chain" id="PRO_0000098687" description="Methionine synthase">
    <location>
        <begin position="1"/>
        <end position="338"/>
    </location>
</feature>
<feature type="binding site" evidence="1">
    <location>
        <position position="210"/>
    </location>
    <ligand>
        <name>Zn(2+)</name>
        <dbReference type="ChEBI" id="CHEBI:29105"/>
        <note>catalytic</note>
    </ligand>
</feature>
<feature type="binding site" evidence="1">
    <location>
        <position position="212"/>
    </location>
    <ligand>
        <name>Zn(2+)</name>
        <dbReference type="ChEBI" id="CHEBI:29105"/>
        <note>catalytic</note>
    </ligand>
</feature>
<feature type="binding site" evidence="1">
    <location>
        <position position="234"/>
    </location>
    <ligand>
        <name>Zn(2+)</name>
        <dbReference type="ChEBI" id="CHEBI:29105"/>
        <note>catalytic</note>
    </ligand>
</feature>
<feature type="binding site" evidence="1">
    <location>
        <position position="294"/>
    </location>
    <ligand>
        <name>Zn(2+)</name>
        <dbReference type="ChEBI" id="CHEBI:29105"/>
        <note>catalytic</note>
    </ligand>
</feature>
<sequence>MELPILPTSVIGSYPKPRWLLRMYKLRELGKIPEEDFKEAVKDASVAVLREHERAGVDIPWDGEMWRSEMTEHFTAKISGFKFYGPVRVWGNAYFNKAAAVDKLEYKEPLVLEEFLWVRENTTREIVKVPITGPYTIAEWSFNEYYPDKESFVMDLAKIINKELKTLEEHGATYIQLDEPAMLNHPDEVPLAVEAINRAVKGIKIKVGLHVCYSNYYLLADYFDDIRVTQFALEFANRQFRDMDFLKKLSGKELGFGVVDVHNPRIETVDEIVRAIKKAFNYLEPEWLYINPDCGLKLLDRRIAYQKLVNMVKAVRIVRKELEKEGRAETEFRTLNDI</sequence>
<organism>
    <name type="scientific">Pyrococcus abyssi (strain GE5 / Orsay)</name>
    <dbReference type="NCBI Taxonomy" id="272844"/>
    <lineage>
        <taxon>Archaea</taxon>
        <taxon>Methanobacteriati</taxon>
        <taxon>Methanobacteriota</taxon>
        <taxon>Thermococci</taxon>
        <taxon>Thermococcales</taxon>
        <taxon>Thermococcaceae</taxon>
        <taxon>Pyrococcus</taxon>
    </lineage>
</organism>
<keyword id="KW-0028">Amino-acid biosynthesis</keyword>
<keyword id="KW-0479">Metal-binding</keyword>
<keyword id="KW-0486">Methionine biosynthesis</keyword>
<keyword id="KW-0489">Methyltransferase</keyword>
<keyword id="KW-0808">Transferase</keyword>
<keyword id="KW-0862">Zinc</keyword>